<keyword id="KW-0058">Aromatic hydrocarbons catabolism</keyword>
<keyword id="KW-0456">Lyase</keyword>
<keyword id="KW-0464">Manganese</keyword>
<keyword id="KW-0479">Metal-binding</keyword>
<feature type="chain" id="PRO_0000387826" description="4-hydroxy-2-oxovalerate aldolase">
    <location>
        <begin position="1"/>
        <end position="337"/>
    </location>
</feature>
<feature type="domain" description="Pyruvate carboxyltransferase" evidence="1">
    <location>
        <begin position="6"/>
        <end position="258"/>
    </location>
</feature>
<feature type="active site" description="Proton acceptor" evidence="1">
    <location>
        <position position="18"/>
    </location>
</feature>
<feature type="binding site" evidence="1">
    <location>
        <begin position="14"/>
        <end position="15"/>
    </location>
    <ligand>
        <name>substrate</name>
    </ligand>
</feature>
<feature type="binding site" evidence="1">
    <location>
        <position position="15"/>
    </location>
    <ligand>
        <name>Mn(2+)</name>
        <dbReference type="ChEBI" id="CHEBI:29035"/>
    </ligand>
</feature>
<feature type="binding site" evidence="1">
    <location>
        <position position="168"/>
    </location>
    <ligand>
        <name>substrate</name>
    </ligand>
</feature>
<feature type="binding site" evidence="1">
    <location>
        <position position="197"/>
    </location>
    <ligand>
        <name>Mn(2+)</name>
        <dbReference type="ChEBI" id="CHEBI:29035"/>
    </ligand>
</feature>
<feature type="binding site" evidence="1">
    <location>
        <position position="197"/>
    </location>
    <ligand>
        <name>substrate</name>
    </ligand>
</feature>
<feature type="binding site" evidence="1">
    <location>
        <position position="199"/>
    </location>
    <ligand>
        <name>Mn(2+)</name>
        <dbReference type="ChEBI" id="CHEBI:29035"/>
    </ligand>
</feature>
<feature type="binding site" evidence="1">
    <location>
        <position position="288"/>
    </location>
    <ligand>
        <name>substrate</name>
    </ligand>
</feature>
<feature type="site" description="Transition state stabilizer" evidence="1">
    <location>
        <position position="14"/>
    </location>
</feature>
<accession>B1J0S7</accession>
<evidence type="ECO:0000255" key="1">
    <source>
        <dbReference type="HAMAP-Rule" id="MF_01656"/>
    </source>
</evidence>
<comment type="function">
    <text evidence="1">Catalyzes the retro-aldol cleavage of 4-hydroxy-2-oxopentanoate to pyruvate and acetaldehyde. Is involved in the meta-cleavage pathway for the degradation of aromatic compounds.</text>
</comment>
<comment type="catalytic activity">
    <reaction evidence="1">
        <text>(S)-4-hydroxy-2-oxopentanoate = acetaldehyde + pyruvate</text>
        <dbReference type="Rhea" id="RHEA:22624"/>
        <dbReference type="ChEBI" id="CHEBI:15343"/>
        <dbReference type="ChEBI" id="CHEBI:15361"/>
        <dbReference type="ChEBI" id="CHEBI:73143"/>
        <dbReference type="EC" id="4.1.3.39"/>
    </reaction>
</comment>
<comment type="pathway">
    <text evidence="1">Aromatic compound metabolism; 3-phenylpropanoate degradation.</text>
</comment>
<comment type="subunit">
    <text evidence="1">Interacts with MhpF.</text>
</comment>
<comment type="similarity">
    <text evidence="1">Belongs to the 4-hydroxy-2-oxovalerate aldolase family.</text>
</comment>
<reference key="1">
    <citation type="submission" date="2008-02" db="EMBL/GenBank/DDBJ databases">
        <title>Complete sequence of Escherichia coli C str. ATCC 8739.</title>
        <authorList>
            <person name="Copeland A."/>
            <person name="Lucas S."/>
            <person name="Lapidus A."/>
            <person name="Glavina del Rio T."/>
            <person name="Dalin E."/>
            <person name="Tice H."/>
            <person name="Bruce D."/>
            <person name="Goodwin L."/>
            <person name="Pitluck S."/>
            <person name="Kiss H."/>
            <person name="Brettin T."/>
            <person name="Detter J.C."/>
            <person name="Han C."/>
            <person name="Kuske C.R."/>
            <person name="Schmutz J."/>
            <person name="Larimer F."/>
            <person name="Land M."/>
            <person name="Hauser L."/>
            <person name="Kyrpides N."/>
            <person name="Mikhailova N."/>
            <person name="Ingram L."/>
            <person name="Richardson P."/>
        </authorList>
    </citation>
    <scope>NUCLEOTIDE SEQUENCE [LARGE SCALE GENOMIC DNA]</scope>
    <source>
        <strain>ATCC 8739 / DSM 1576 / NBRC 3972 / NCIMB 8545 / WDCM 00012 / Crooks</strain>
    </source>
</reference>
<name>HOA_ECOLC</name>
<dbReference type="EC" id="4.1.3.39" evidence="1"/>
<dbReference type="EMBL" id="CP000946">
    <property type="protein sequence ID" value="ACA78895.1"/>
    <property type="molecule type" value="Genomic_DNA"/>
</dbReference>
<dbReference type="RefSeq" id="WP_001013499.1">
    <property type="nucleotide sequence ID" value="NZ_MTFT01000010.1"/>
</dbReference>
<dbReference type="SMR" id="B1J0S7"/>
<dbReference type="GeneID" id="75202515"/>
<dbReference type="KEGG" id="ecl:EcolC_3273"/>
<dbReference type="HOGENOM" id="CLU_049173_0_0_6"/>
<dbReference type="UniPathway" id="UPA00714"/>
<dbReference type="GO" id="GO:0003852">
    <property type="term" value="F:2-isopropylmalate synthase activity"/>
    <property type="evidence" value="ECO:0007669"/>
    <property type="project" value="TreeGrafter"/>
</dbReference>
<dbReference type="GO" id="GO:0008701">
    <property type="term" value="F:4-hydroxy-2-oxovalerate aldolase activity"/>
    <property type="evidence" value="ECO:0007669"/>
    <property type="project" value="UniProtKB-UniRule"/>
</dbReference>
<dbReference type="GO" id="GO:0030145">
    <property type="term" value="F:manganese ion binding"/>
    <property type="evidence" value="ECO:0007669"/>
    <property type="project" value="UniProtKB-UniRule"/>
</dbReference>
<dbReference type="GO" id="GO:0019380">
    <property type="term" value="P:3-phenylpropionate catabolic process"/>
    <property type="evidence" value="ECO:0007669"/>
    <property type="project" value="UniProtKB-UniRule"/>
</dbReference>
<dbReference type="GO" id="GO:0009098">
    <property type="term" value="P:L-leucine biosynthetic process"/>
    <property type="evidence" value="ECO:0007669"/>
    <property type="project" value="TreeGrafter"/>
</dbReference>
<dbReference type="CDD" id="cd07943">
    <property type="entry name" value="DRE_TIM_HOA"/>
    <property type="match status" value="1"/>
</dbReference>
<dbReference type="FunFam" id="1.10.8.60:FF:000042">
    <property type="entry name" value="4-hydroxy-2-oxovalerate aldolase"/>
    <property type="match status" value="1"/>
</dbReference>
<dbReference type="FunFam" id="3.20.20.70:FF:000072">
    <property type="entry name" value="4-hydroxy-2-oxovalerate aldolase"/>
    <property type="match status" value="1"/>
</dbReference>
<dbReference type="Gene3D" id="1.10.8.60">
    <property type="match status" value="1"/>
</dbReference>
<dbReference type="Gene3D" id="3.20.20.70">
    <property type="entry name" value="Aldolase class I"/>
    <property type="match status" value="1"/>
</dbReference>
<dbReference type="HAMAP" id="MF_01656">
    <property type="entry name" value="HOA"/>
    <property type="match status" value="1"/>
</dbReference>
<dbReference type="InterPro" id="IPR050073">
    <property type="entry name" value="2-IPM_HCS-like"/>
</dbReference>
<dbReference type="InterPro" id="IPR017629">
    <property type="entry name" value="4OH_2_O-val_aldolase"/>
</dbReference>
<dbReference type="InterPro" id="IPR013785">
    <property type="entry name" value="Aldolase_TIM"/>
</dbReference>
<dbReference type="InterPro" id="IPR012425">
    <property type="entry name" value="DmpG_comm"/>
</dbReference>
<dbReference type="InterPro" id="IPR035685">
    <property type="entry name" value="DRE_TIM_HOA"/>
</dbReference>
<dbReference type="InterPro" id="IPR000891">
    <property type="entry name" value="PYR_CT"/>
</dbReference>
<dbReference type="NCBIfam" id="TIGR03217">
    <property type="entry name" value="4OH_2_O_val_ald"/>
    <property type="match status" value="1"/>
</dbReference>
<dbReference type="NCBIfam" id="NF006049">
    <property type="entry name" value="PRK08195.1"/>
    <property type="match status" value="1"/>
</dbReference>
<dbReference type="PANTHER" id="PTHR10277:SF9">
    <property type="entry name" value="2-ISOPROPYLMALATE SYNTHASE 1, CHLOROPLASTIC-RELATED"/>
    <property type="match status" value="1"/>
</dbReference>
<dbReference type="PANTHER" id="PTHR10277">
    <property type="entry name" value="HOMOCITRATE SYNTHASE-RELATED"/>
    <property type="match status" value="1"/>
</dbReference>
<dbReference type="Pfam" id="PF07836">
    <property type="entry name" value="DmpG_comm"/>
    <property type="match status" value="1"/>
</dbReference>
<dbReference type="Pfam" id="PF00682">
    <property type="entry name" value="HMGL-like"/>
    <property type="match status" value="1"/>
</dbReference>
<dbReference type="SUPFAM" id="SSF51569">
    <property type="entry name" value="Aldolase"/>
    <property type="match status" value="1"/>
</dbReference>
<dbReference type="SUPFAM" id="SSF89000">
    <property type="entry name" value="post-HMGL domain-like"/>
    <property type="match status" value="1"/>
</dbReference>
<dbReference type="PROSITE" id="PS50991">
    <property type="entry name" value="PYR_CT"/>
    <property type="match status" value="1"/>
</dbReference>
<proteinExistence type="inferred from homology"/>
<organism>
    <name type="scientific">Escherichia coli (strain ATCC 8739 / DSM 1576 / NBRC 3972 / NCIMB 8545 / WDCM 00012 / Crooks)</name>
    <dbReference type="NCBI Taxonomy" id="481805"/>
    <lineage>
        <taxon>Bacteria</taxon>
        <taxon>Pseudomonadati</taxon>
        <taxon>Pseudomonadota</taxon>
        <taxon>Gammaproteobacteria</taxon>
        <taxon>Enterobacterales</taxon>
        <taxon>Enterobacteriaceae</taxon>
        <taxon>Escherichia</taxon>
    </lineage>
</organism>
<gene>
    <name evidence="1" type="primary">mhpE</name>
    <name type="ordered locus">EcolC_3273</name>
</gene>
<sequence length="337" mass="36470">MNGKKLYISDVTLRDGMHAIRHQYSLENVRQIAKALDDARVDSIEVAHGDGLQGSSFNYGFGAHSDLEWIEAAADVVKHAKIATLLLPGIGTIHDLKNAWQAGARVVRVATHCTEADVSAQHIQYARELGMDTVGFLMMSHMTTPENLAKQAKLMEGYGATCIYVVDSGGAMNMSDIRDRFRALKAELKPETQTGMHAHHNLSLGVANSIAAVEEGCDRIDASLAGMGAGAGNAPLEVFIAAADKLGWQHGTDLYALMDAADDLVRPLQDRPVRVDRETLALGYAGVYSSFLRHCETAAARYGLSAVDILVELGKRRMVGGQEDMIVDVALDLRNNK</sequence>
<protein>
    <recommendedName>
        <fullName evidence="1">4-hydroxy-2-oxovalerate aldolase</fullName>
        <shortName evidence="1">HOA</shortName>
        <ecNumber evidence="1">4.1.3.39</ecNumber>
    </recommendedName>
    <alternativeName>
        <fullName evidence="1">4-hydroxy-2-keto-pentanoic acid aldolase</fullName>
    </alternativeName>
    <alternativeName>
        <fullName evidence="1">4-hydroxy-2-oxopentanoate aldolase</fullName>
    </alternativeName>
</protein>